<comment type="function">
    <text evidence="1">Phosphorolytic 3'-5' exoribonuclease that plays an important role in tRNA 3'-end maturation. Removes nucleotide residues following the 3'-CCA terminus of tRNAs; can also add nucleotides to the ends of RNA molecules by using nucleoside diphosphates as substrates, but this may not be physiologically important. Probably plays a role in initiation of 16S rRNA degradation (leading to ribosome degradation) during starvation.</text>
</comment>
<comment type="catalytic activity">
    <reaction evidence="1">
        <text>tRNA(n+1) + phosphate = tRNA(n) + a ribonucleoside 5'-diphosphate</text>
        <dbReference type="Rhea" id="RHEA:10628"/>
        <dbReference type="Rhea" id="RHEA-COMP:17343"/>
        <dbReference type="Rhea" id="RHEA-COMP:17344"/>
        <dbReference type="ChEBI" id="CHEBI:43474"/>
        <dbReference type="ChEBI" id="CHEBI:57930"/>
        <dbReference type="ChEBI" id="CHEBI:173114"/>
        <dbReference type="EC" id="2.7.7.56"/>
    </reaction>
</comment>
<comment type="subunit">
    <text evidence="1">Homohexameric ring arranged as a trimer of dimers.</text>
</comment>
<comment type="similarity">
    <text evidence="1">Belongs to the RNase PH family.</text>
</comment>
<sequence length="259" mass="27351">MSKREDGRLDHELRPVIITRGFTENPAGSVLIEFGHTKVLCTASVTEGVPRWRKATGLGWLTAEYAMLPSATHSRSDRESVRGRLSGRTQEISRLIGRSLRACIDLAALGENTIAIDCDVLQADGGTRTAAITGAYVALADAVTYLSAAGKLSDPRPLSCAIAAVSVGVVDGRIRVDLPYEEDSRAEVDMNVVATDTGTLVEIQGTGEGATFARSTLDKLLDMALGACDTLFAAQRDALALPYPGVLPQGPPPPKAFGT</sequence>
<name>RNPH_MYCTO</name>
<evidence type="ECO:0000255" key="1">
    <source>
        <dbReference type="HAMAP-Rule" id="MF_00564"/>
    </source>
</evidence>
<reference key="1">
    <citation type="journal article" date="2002" name="J. Bacteriol.">
        <title>Whole-genome comparison of Mycobacterium tuberculosis clinical and laboratory strains.</title>
        <authorList>
            <person name="Fleischmann R.D."/>
            <person name="Alland D."/>
            <person name="Eisen J.A."/>
            <person name="Carpenter L."/>
            <person name="White O."/>
            <person name="Peterson J.D."/>
            <person name="DeBoy R.T."/>
            <person name="Dodson R.J."/>
            <person name="Gwinn M.L."/>
            <person name="Haft D.H."/>
            <person name="Hickey E.K."/>
            <person name="Kolonay J.F."/>
            <person name="Nelson W.C."/>
            <person name="Umayam L.A."/>
            <person name="Ermolaeva M.D."/>
            <person name="Salzberg S.L."/>
            <person name="Delcher A."/>
            <person name="Utterback T.R."/>
            <person name="Weidman J.F."/>
            <person name="Khouri H.M."/>
            <person name="Gill J."/>
            <person name="Mikula A."/>
            <person name="Bishai W."/>
            <person name="Jacobs W.R. Jr."/>
            <person name="Venter J.C."/>
            <person name="Fraser C.M."/>
        </authorList>
    </citation>
    <scope>NUCLEOTIDE SEQUENCE [LARGE SCALE GENOMIC DNA]</scope>
    <source>
        <strain>CDC 1551 / Oshkosh</strain>
    </source>
</reference>
<organism>
    <name type="scientific">Mycobacterium tuberculosis (strain CDC 1551 / Oshkosh)</name>
    <dbReference type="NCBI Taxonomy" id="83331"/>
    <lineage>
        <taxon>Bacteria</taxon>
        <taxon>Bacillati</taxon>
        <taxon>Actinomycetota</taxon>
        <taxon>Actinomycetes</taxon>
        <taxon>Mycobacteriales</taxon>
        <taxon>Mycobacteriaceae</taxon>
        <taxon>Mycobacterium</taxon>
        <taxon>Mycobacterium tuberculosis complex</taxon>
    </lineage>
</organism>
<protein>
    <recommendedName>
        <fullName evidence="1">Ribonuclease PH</fullName>
        <shortName evidence="1">RNase PH</shortName>
        <ecNumber evidence="1">2.7.7.56</ecNumber>
    </recommendedName>
    <alternativeName>
        <fullName evidence="1">tRNA nucleotidyltransferase</fullName>
    </alternativeName>
</protein>
<proteinExistence type="inferred from homology"/>
<feature type="chain" id="PRO_0000428275" description="Ribonuclease PH">
    <location>
        <begin position="1"/>
        <end position="259"/>
    </location>
</feature>
<feature type="binding site" evidence="1">
    <location>
        <position position="88"/>
    </location>
    <ligand>
        <name>phosphate</name>
        <dbReference type="ChEBI" id="CHEBI:43474"/>
        <note>substrate</note>
    </ligand>
</feature>
<feature type="binding site" evidence="1">
    <location>
        <begin position="126"/>
        <end position="128"/>
    </location>
    <ligand>
        <name>phosphate</name>
        <dbReference type="ChEBI" id="CHEBI:43474"/>
        <note>substrate</note>
    </ligand>
</feature>
<dbReference type="EC" id="2.7.7.56" evidence="1"/>
<dbReference type="EMBL" id="AE000516">
    <property type="protein sequence ID" value="AAK45646.1"/>
    <property type="molecule type" value="Genomic_DNA"/>
</dbReference>
<dbReference type="PIR" id="C70739">
    <property type="entry name" value="C70739"/>
</dbReference>
<dbReference type="RefSeq" id="WP_003406926.1">
    <property type="nucleotide sequence ID" value="NZ_KK341227.1"/>
</dbReference>
<dbReference type="SMR" id="P9WGZ6"/>
<dbReference type="KEGG" id="mtc:MT1381"/>
<dbReference type="PATRIC" id="fig|83331.31.peg.1489"/>
<dbReference type="HOGENOM" id="CLU_050858_0_0_11"/>
<dbReference type="Proteomes" id="UP000001020">
    <property type="component" value="Chromosome"/>
</dbReference>
<dbReference type="GO" id="GO:0000175">
    <property type="term" value="F:3'-5'-RNA exonuclease activity"/>
    <property type="evidence" value="ECO:0007669"/>
    <property type="project" value="UniProtKB-UniRule"/>
</dbReference>
<dbReference type="GO" id="GO:0000049">
    <property type="term" value="F:tRNA binding"/>
    <property type="evidence" value="ECO:0007669"/>
    <property type="project" value="UniProtKB-UniRule"/>
</dbReference>
<dbReference type="GO" id="GO:0009022">
    <property type="term" value="F:tRNA nucleotidyltransferase activity"/>
    <property type="evidence" value="ECO:0007669"/>
    <property type="project" value="UniProtKB-UniRule"/>
</dbReference>
<dbReference type="GO" id="GO:0016075">
    <property type="term" value="P:rRNA catabolic process"/>
    <property type="evidence" value="ECO:0007669"/>
    <property type="project" value="UniProtKB-UniRule"/>
</dbReference>
<dbReference type="GO" id="GO:0006364">
    <property type="term" value="P:rRNA processing"/>
    <property type="evidence" value="ECO:0007669"/>
    <property type="project" value="UniProtKB-KW"/>
</dbReference>
<dbReference type="GO" id="GO:0008033">
    <property type="term" value="P:tRNA processing"/>
    <property type="evidence" value="ECO:0007669"/>
    <property type="project" value="UniProtKB-UniRule"/>
</dbReference>
<dbReference type="CDD" id="cd11362">
    <property type="entry name" value="RNase_PH_bact"/>
    <property type="match status" value="1"/>
</dbReference>
<dbReference type="FunFam" id="3.30.230.70:FF:000003">
    <property type="entry name" value="Ribonuclease PH"/>
    <property type="match status" value="1"/>
</dbReference>
<dbReference type="Gene3D" id="3.30.230.70">
    <property type="entry name" value="GHMP Kinase, N-terminal domain"/>
    <property type="match status" value="1"/>
</dbReference>
<dbReference type="HAMAP" id="MF_00564">
    <property type="entry name" value="RNase_PH"/>
    <property type="match status" value="1"/>
</dbReference>
<dbReference type="InterPro" id="IPR001247">
    <property type="entry name" value="ExoRNase_PH_dom1"/>
</dbReference>
<dbReference type="InterPro" id="IPR015847">
    <property type="entry name" value="ExoRNase_PH_dom2"/>
</dbReference>
<dbReference type="InterPro" id="IPR036345">
    <property type="entry name" value="ExoRNase_PH_dom2_sf"/>
</dbReference>
<dbReference type="InterPro" id="IPR027408">
    <property type="entry name" value="PNPase/RNase_PH_dom_sf"/>
</dbReference>
<dbReference type="InterPro" id="IPR020568">
    <property type="entry name" value="Ribosomal_Su5_D2-typ_SF"/>
</dbReference>
<dbReference type="InterPro" id="IPR050080">
    <property type="entry name" value="RNase_PH"/>
</dbReference>
<dbReference type="InterPro" id="IPR002381">
    <property type="entry name" value="RNase_PH_bac-type"/>
</dbReference>
<dbReference type="InterPro" id="IPR018336">
    <property type="entry name" value="RNase_PH_CS"/>
</dbReference>
<dbReference type="NCBIfam" id="TIGR01966">
    <property type="entry name" value="RNasePH"/>
    <property type="match status" value="1"/>
</dbReference>
<dbReference type="PANTHER" id="PTHR11953">
    <property type="entry name" value="EXOSOME COMPLEX COMPONENT"/>
    <property type="match status" value="1"/>
</dbReference>
<dbReference type="PANTHER" id="PTHR11953:SF0">
    <property type="entry name" value="EXOSOME COMPLEX COMPONENT RRP41"/>
    <property type="match status" value="1"/>
</dbReference>
<dbReference type="Pfam" id="PF01138">
    <property type="entry name" value="RNase_PH"/>
    <property type="match status" value="1"/>
</dbReference>
<dbReference type="Pfam" id="PF03725">
    <property type="entry name" value="RNase_PH_C"/>
    <property type="match status" value="1"/>
</dbReference>
<dbReference type="SUPFAM" id="SSF55666">
    <property type="entry name" value="Ribonuclease PH domain 2-like"/>
    <property type="match status" value="1"/>
</dbReference>
<dbReference type="SUPFAM" id="SSF54211">
    <property type="entry name" value="Ribosomal protein S5 domain 2-like"/>
    <property type="match status" value="1"/>
</dbReference>
<dbReference type="PROSITE" id="PS01277">
    <property type="entry name" value="RIBONUCLEASE_PH"/>
    <property type="match status" value="1"/>
</dbReference>
<gene>
    <name evidence="1" type="primary">rph</name>
    <name type="synonym">rphA</name>
    <name type="ordered locus">MT1381</name>
</gene>
<accession>P9WGZ6</accession>
<accession>L0T9C5</accession>
<accession>Q10628</accession>
<keyword id="KW-0548">Nucleotidyltransferase</keyword>
<keyword id="KW-1185">Reference proteome</keyword>
<keyword id="KW-0694">RNA-binding</keyword>
<keyword id="KW-0698">rRNA processing</keyword>
<keyword id="KW-0808">Transferase</keyword>
<keyword id="KW-0819">tRNA processing</keyword>
<keyword id="KW-0820">tRNA-binding</keyword>